<organism>
    <name type="scientific">Aspergillus terreus (strain NIH 2624 / FGSC A1156)</name>
    <dbReference type="NCBI Taxonomy" id="341663"/>
    <lineage>
        <taxon>Eukaryota</taxon>
        <taxon>Fungi</taxon>
        <taxon>Dikarya</taxon>
        <taxon>Ascomycota</taxon>
        <taxon>Pezizomycotina</taxon>
        <taxon>Eurotiomycetes</taxon>
        <taxon>Eurotiomycetidae</taxon>
        <taxon>Eurotiales</taxon>
        <taxon>Aspergillaceae</taxon>
        <taxon>Aspergillus</taxon>
        <taxon>Aspergillus subgen. Circumdati</taxon>
    </lineage>
</organism>
<keyword id="KW-0349">Heme</keyword>
<keyword id="KW-0408">Iron</keyword>
<keyword id="KW-0479">Metal-binding</keyword>
<keyword id="KW-0503">Monooxygenase</keyword>
<keyword id="KW-0560">Oxidoreductase</keyword>
<keyword id="KW-1185">Reference proteome</keyword>
<protein>
    <recommendedName>
        <fullName evidence="3">Cytochrome P450 monooxygenase pytD</fullName>
        <ecNumber evidence="5">1.14.14.-</ecNumber>
    </recommendedName>
    <alternativeName>
        <fullName evidence="3">Pyranterreones biosynthesis cluster protein D</fullName>
    </alternativeName>
</protein>
<proteinExistence type="evidence at transcript level"/>
<feature type="chain" id="PRO_0000450469" description="Cytochrome P450 monooxygenase pytD">
    <location>
        <begin position="1"/>
        <end position="378"/>
    </location>
</feature>
<feature type="binding site" description="axial binding residue" evidence="1">
    <location>
        <position position="321"/>
    </location>
    <ligand>
        <name>heme</name>
        <dbReference type="ChEBI" id="CHEBI:30413"/>
    </ligand>
    <ligandPart>
        <name>Fe</name>
        <dbReference type="ChEBI" id="CHEBI:18248"/>
    </ligandPart>
</feature>
<dbReference type="EC" id="1.14.14.-" evidence="5"/>
<dbReference type="EMBL" id="CH476594">
    <property type="protein sequence ID" value="EAU39562.1"/>
    <property type="status" value="ALT_SEQ"/>
    <property type="molecule type" value="Genomic_DNA"/>
</dbReference>
<dbReference type="RefSeq" id="XP_001211002.1">
    <property type="nucleotide sequence ID" value="XM_001211002.1"/>
</dbReference>
<dbReference type="SMR" id="Q0CZG8"/>
<dbReference type="STRING" id="341663.Q0CZG8"/>
<dbReference type="EnsemblFungi" id="EAU39562">
    <property type="protein sequence ID" value="EAU39562"/>
    <property type="gene ID" value="ATEG_00916"/>
</dbReference>
<dbReference type="GeneID" id="4355679"/>
<dbReference type="eggNOG" id="KOG0684">
    <property type="taxonomic scope" value="Eukaryota"/>
</dbReference>
<dbReference type="HOGENOM" id="CLU_1189689_0_0_1"/>
<dbReference type="OrthoDB" id="1055148at2759"/>
<dbReference type="Proteomes" id="UP000007963">
    <property type="component" value="Unassembled WGS sequence"/>
</dbReference>
<dbReference type="GO" id="GO:0020037">
    <property type="term" value="F:heme binding"/>
    <property type="evidence" value="ECO:0007669"/>
    <property type="project" value="InterPro"/>
</dbReference>
<dbReference type="GO" id="GO:0005506">
    <property type="term" value="F:iron ion binding"/>
    <property type="evidence" value="ECO:0007669"/>
    <property type="project" value="InterPro"/>
</dbReference>
<dbReference type="GO" id="GO:0004497">
    <property type="term" value="F:monooxygenase activity"/>
    <property type="evidence" value="ECO:0007669"/>
    <property type="project" value="UniProtKB-KW"/>
</dbReference>
<dbReference type="GO" id="GO:0016705">
    <property type="term" value="F:oxidoreductase activity, acting on paired donors, with incorporation or reduction of molecular oxygen"/>
    <property type="evidence" value="ECO:0007669"/>
    <property type="project" value="InterPro"/>
</dbReference>
<dbReference type="Gene3D" id="1.10.630.10">
    <property type="entry name" value="Cytochrome P450"/>
    <property type="match status" value="1"/>
</dbReference>
<dbReference type="InterPro" id="IPR001128">
    <property type="entry name" value="Cyt_P450"/>
</dbReference>
<dbReference type="InterPro" id="IPR017972">
    <property type="entry name" value="Cyt_P450_CS"/>
</dbReference>
<dbReference type="InterPro" id="IPR002401">
    <property type="entry name" value="Cyt_P450_E_grp-I"/>
</dbReference>
<dbReference type="InterPro" id="IPR036396">
    <property type="entry name" value="Cyt_P450_sf"/>
</dbReference>
<dbReference type="InterPro" id="IPR050121">
    <property type="entry name" value="Cytochrome_P450_monoxygenase"/>
</dbReference>
<dbReference type="PANTHER" id="PTHR24305">
    <property type="entry name" value="CYTOCHROME P450"/>
    <property type="match status" value="1"/>
</dbReference>
<dbReference type="PANTHER" id="PTHR24305:SF166">
    <property type="entry name" value="CYTOCHROME P450 12A4, MITOCHONDRIAL-RELATED"/>
    <property type="match status" value="1"/>
</dbReference>
<dbReference type="Pfam" id="PF00067">
    <property type="entry name" value="p450"/>
    <property type="match status" value="1"/>
</dbReference>
<dbReference type="PRINTS" id="PR00463">
    <property type="entry name" value="EP450I"/>
</dbReference>
<dbReference type="PRINTS" id="PR00385">
    <property type="entry name" value="P450"/>
</dbReference>
<dbReference type="SUPFAM" id="SSF48264">
    <property type="entry name" value="Cytochrome P450"/>
    <property type="match status" value="1"/>
</dbReference>
<dbReference type="PROSITE" id="PS00086">
    <property type="entry name" value="CYTOCHROME_P450"/>
    <property type="match status" value="1"/>
</dbReference>
<comment type="function">
    <text evidence="2 5">Cytochrome P450 monooxygenase pytD; part of the gene cluster that mediates the biosynthesis of pyranterreones, a family of antioxidative compounds (PubMed:32077283). The first step of pyranonigrins biosynthesis is performed by the hybrid PKS-NRPS synthetase pytA that condenses 4 malonyl-CoA units ato the acetyl starter unit by the modular PKS of pytA (PubMed:32077283). The acyl chain is then connected to an L-serine through the amide bond by the modular NRPS of pytA (PubMed:32077283). A tetramic acid is formed and released from the PKS-NRPS pytA to give pyranterreone 5 with the help of the thioesterase pytI (PubMed:32077283). Pyranterreone 5 could be methylated by pytC to afford pyranterreone 6 (Probable). Both pyranterreones 5 and 6 are subsequently oxidized by the FAD-linked oxidoreductase pytB and the cytochrome P450 monooxygenase pytD to form the fused gamma-pyrone core, resulting in pyranterreones 7 and 11, respectively (PubMed:32077283). The hydroxy group at C-8 of pyranterreones 7 and 11 are dehydrated by the aspartyl protease pytH to form a delta-7 double bond to give pyranterreones 3 and 1, 2 accordingly (PubMed:32077283). The exo-methylene of pyranterreone 3 could be reduced into a pendant methyl by reductase pytE to provide pyranterreone 4, also known as cordylactam (Probable). Pyranterreone 4 can be reconverted to pyranterreone 3 through pytB-catalyzed dehydrogenation or further oxidized to pyranterreones 9 and 10 (Probable).</text>
</comment>
<comment type="cofactor">
    <cofactor evidence="1">
        <name>heme</name>
        <dbReference type="ChEBI" id="CHEBI:30413"/>
    </cofactor>
</comment>
<comment type="pathway">
    <text evidence="2">Secondary metabolite biosynthesis.</text>
</comment>
<comment type="induction">
    <text evidence="2">Expression is positively regulated by the cluster-specific transcription factor pytR.</text>
</comment>
<comment type="disruption phenotype">
    <text evidence="2">Abolishes the production of most pyranterreones, but accumulates high amounts of pyranterreone 5.</text>
</comment>
<comment type="similarity">
    <text evidence="4">Belongs to the cytochrome P450 family.</text>
</comment>
<comment type="sequence caution" evidence="4">
    <conflict type="erroneous gene model prediction">
        <sequence resource="EMBL-CDS" id="EAU39562"/>
    </conflict>
</comment>
<name>PYTD_ASPTN</name>
<gene>
    <name evidence="3" type="primary">pytD</name>
    <name type="ORF">ATEG_00916</name>
</gene>
<evidence type="ECO:0000250" key="1">
    <source>
        <dbReference type="UniProtKB" id="P04798"/>
    </source>
</evidence>
<evidence type="ECO:0000269" key="2">
    <source>
    </source>
</evidence>
<evidence type="ECO:0000303" key="3">
    <source>
    </source>
</evidence>
<evidence type="ECO:0000305" key="4"/>
<evidence type="ECO:0000305" key="5">
    <source>
    </source>
</evidence>
<sequence length="378" mass="43110">MGLFLNKIVIPGYFSHLRSMVGSLSRGISRKATLEYYAQVADEETAKAVDGWTCKSEAEKSVALFEEISFLVHKIIVRCLMGQDFYDHHVRELYDLLRTMEANVGSIWHTVLPGWVAHGPARRLWRCRQRVQEIFDFRLRERERSPEEWKKRLDYISYTLQDPATAHLSRFYGAHHTLLMFAAHTSTVASISWILLEWKSPHRLQRLREELATHALEQSPFLDALVKETGRHYSGNSDVRWARKPKTLRTEVASVPESRITIPEGTIVSISPYLTHHDPATWDNADTYLPERWLADPDLAKKMNEGGQLRYIPFGAGSHRCPGEKMAILIAKIAVARIVQSCDLAWGEGSSENTLGGLDFSKVGSPWLKGDVQVRFQV</sequence>
<accession>Q0CZG8</accession>
<reference key="1">
    <citation type="submission" date="2005-09" db="EMBL/GenBank/DDBJ databases">
        <title>Annotation of the Aspergillus terreus NIH2624 genome.</title>
        <authorList>
            <person name="Birren B.W."/>
            <person name="Lander E.S."/>
            <person name="Galagan J.E."/>
            <person name="Nusbaum C."/>
            <person name="Devon K."/>
            <person name="Henn M."/>
            <person name="Ma L.-J."/>
            <person name="Jaffe D.B."/>
            <person name="Butler J."/>
            <person name="Alvarez P."/>
            <person name="Gnerre S."/>
            <person name="Grabherr M."/>
            <person name="Kleber M."/>
            <person name="Mauceli E.W."/>
            <person name="Brockman W."/>
            <person name="Rounsley S."/>
            <person name="Young S.K."/>
            <person name="LaButti K."/>
            <person name="Pushparaj V."/>
            <person name="DeCaprio D."/>
            <person name="Crawford M."/>
            <person name="Koehrsen M."/>
            <person name="Engels R."/>
            <person name="Montgomery P."/>
            <person name="Pearson M."/>
            <person name="Howarth C."/>
            <person name="Larson L."/>
            <person name="Luoma S."/>
            <person name="White J."/>
            <person name="Alvarado L."/>
            <person name="Kodira C.D."/>
            <person name="Zeng Q."/>
            <person name="Oleary S."/>
            <person name="Yandava C."/>
            <person name="Denning D.W."/>
            <person name="Nierman W.C."/>
            <person name="Milne T."/>
            <person name="Madden K."/>
        </authorList>
    </citation>
    <scope>NUCLEOTIDE SEQUENCE [LARGE SCALE GENOMIC DNA]</scope>
    <source>
        <strain>NIH 2624 / FGSC A1156</strain>
    </source>
</reference>
<reference key="2">
    <citation type="journal article" date="2020" name="J. Nat. Prod.">
        <title>Discovery and characterization of a PKS-NRPS hybrid in Aspergillus terreus by genome mining.</title>
        <authorList>
            <person name="Tang S."/>
            <person name="Zhang W."/>
            <person name="Li Z."/>
            <person name="Li H."/>
            <person name="Geng C."/>
            <person name="Huang X."/>
            <person name="Lu X."/>
        </authorList>
    </citation>
    <scope>INDUCTION</scope>
    <scope>FUNCTION</scope>
    <scope>DISRUPTION PHENOTYPE</scope>
    <scope>PATHWAY</scope>
</reference>